<name>Y442_STAAM</name>
<protein>
    <recommendedName>
        <fullName>Uncharacterized lipoprotein SAV0442</fullName>
    </recommendedName>
</protein>
<dbReference type="EMBL" id="BA000017">
    <property type="protein sequence ID" value="BAB56604.1"/>
    <property type="status" value="ALT_INIT"/>
    <property type="molecule type" value="Genomic_DNA"/>
</dbReference>
<dbReference type="RefSeq" id="WP_001802015.1">
    <property type="nucleotide sequence ID" value="NC_002758.2"/>
</dbReference>
<dbReference type="SMR" id="Q99WG0"/>
<dbReference type="DNASU" id="1120399"/>
<dbReference type="KEGG" id="sav:SAV0442"/>
<dbReference type="HOGENOM" id="CLU_071589_0_1_9"/>
<dbReference type="Proteomes" id="UP000002481">
    <property type="component" value="Chromosome"/>
</dbReference>
<dbReference type="GO" id="GO:0005886">
    <property type="term" value="C:plasma membrane"/>
    <property type="evidence" value="ECO:0007669"/>
    <property type="project" value="UniProtKB-SubCell"/>
</dbReference>
<dbReference type="Gene3D" id="2.50.20.40">
    <property type="match status" value="1"/>
</dbReference>
<dbReference type="InterPro" id="IPR007595">
    <property type="entry name" value="Csa"/>
</dbReference>
<dbReference type="InterPro" id="IPR038641">
    <property type="entry name" value="Csa_sf"/>
</dbReference>
<dbReference type="NCBIfam" id="TIGR01742">
    <property type="entry name" value="SA_tandem_lipo"/>
    <property type="match status" value="1"/>
</dbReference>
<dbReference type="Pfam" id="PF04507">
    <property type="entry name" value="DUF576"/>
    <property type="match status" value="1"/>
</dbReference>
<dbReference type="PROSITE" id="PS51257">
    <property type="entry name" value="PROKAR_LIPOPROTEIN"/>
    <property type="match status" value="1"/>
</dbReference>
<accession>Q99WG0</accession>
<feature type="signal peptide" evidence="1">
    <location>
        <begin position="1"/>
        <end position="22"/>
    </location>
</feature>
<feature type="chain" id="PRO_0000282129" description="Uncharacterized lipoprotein SAV0442">
    <location>
        <begin position="23"/>
        <end position="263"/>
    </location>
</feature>
<feature type="lipid moiety-binding region" description="N-palmitoyl cysteine" evidence="1">
    <location>
        <position position="23"/>
    </location>
</feature>
<feature type="lipid moiety-binding region" description="S-diacylglycerol cysteine" evidence="1">
    <location>
        <position position="23"/>
    </location>
</feature>
<organism>
    <name type="scientific">Staphylococcus aureus (strain Mu50 / ATCC 700699)</name>
    <dbReference type="NCBI Taxonomy" id="158878"/>
    <lineage>
        <taxon>Bacteria</taxon>
        <taxon>Bacillati</taxon>
        <taxon>Bacillota</taxon>
        <taxon>Bacilli</taxon>
        <taxon>Bacillales</taxon>
        <taxon>Staphylococcaceae</taxon>
        <taxon>Staphylococcus</taxon>
    </lineage>
</organism>
<proteinExistence type="inferred from homology"/>
<comment type="subcellular location">
    <subcellularLocation>
        <location evidence="1">Cell membrane</location>
        <topology evidence="1">Lipid-anchor</topology>
    </subcellularLocation>
</comment>
<comment type="similarity">
    <text evidence="2">Belongs to the staphylococcal tandem lipoprotein family.</text>
</comment>
<comment type="sequence caution" evidence="2">
    <conflict type="erroneous initiation">
        <sequence resource="EMBL-CDS" id="BAB56604"/>
    </conflict>
</comment>
<gene>
    <name type="primary">lpl6</name>
    <name type="ordered locus">SAV0442</name>
</gene>
<keyword id="KW-1003">Cell membrane</keyword>
<keyword id="KW-0449">Lipoprotein</keyword>
<keyword id="KW-0472">Membrane</keyword>
<keyword id="KW-0564">Palmitate</keyword>
<keyword id="KW-0732">Signal</keyword>
<evidence type="ECO:0000255" key="1">
    <source>
        <dbReference type="PROSITE-ProRule" id="PRU00303"/>
    </source>
</evidence>
<evidence type="ECO:0000305" key="2"/>
<reference key="1">
    <citation type="journal article" date="2001" name="Lancet">
        <title>Whole genome sequencing of meticillin-resistant Staphylococcus aureus.</title>
        <authorList>
            <person name="Kuroda M."/>
            <person name="Ohta T."/>
            <person name="Uchiyama I."/>
            <person name="Baba T."/>
            <person name="Yuzawa H."/>
            <person name="Kobayashi I."/>
            <person name="Cui L."/>
            <person name="Oguchi A."/>
            <person name="Aoki K."/>
            <person name="Nagai Y."/>
            <person name="Lian J.-Q."/>
            <person name="Ito T."/>
            <person name="Kanamori M."/>
            <person name="Matsumaru H."/>
            <person name="Maruyama A."/>
            <person name="Murakami H."/>
            <person name="Hosoyama A."/>
            <person name="Mizutani-Ui Y."/>
            <person name="Takahashi N.K."/>
            <person name="Sawano T."/>
            <person name="Inoue R."/>
            <person name="Kaito C."/>
            <person name="Sekimizu K."/>
            <person name="Hirakawa H."/>
            <person name="Kuhara S."/>
            <person name="Goto S."/>
            <person name="Yabuzaki J."/>
            <person name="Kanehisa M."/>
            <person name="Yamashita A."/>
            <person name="Oshima K."/>
            <person name="Furuya K."/>
            <person name="Yoshino C."/>
            <person name="Shiba T."/>
            <person name="Hattori M."/>
            <person name="Ogasawara N."/>
            <person name="Hayashi H."/>
            <person name="Hiramatsu K."/>
        </authorList>
    </citation>
    <scope>NUCLEOTIDE SEQUENCE [LARGE SCALE GENOMIC DNA]</scope>
    <source>
        <strain>Mu50 / ATCC 700699</strain>
    </source>
</reference>
<sequence length="263" mass="30629">MGYLKRLVLYIVIMVMSVFIIGCDKSSDTAENPKEGSKEAQIKKSFSKTLDMYPIKNLENLYDKEGYRDGEFKKGDKGTWTISTDFAKSNKQGEMNSEGMVLHFNRNTRTATGYYTVRTTYDEVDKLAREKKYRVEFKNNKIVLLDKVEDENLKQKIENFKFFGQYADFKDLKNYKNGRISSNENVPYYEAEYKRNNSDGNVKKLREKYPITTKQSPILKLHIDGDIKGSSVGYKQIEYTFSKEKDDETFMSDFLNFGPSHSK</sequence>